<protein>
    <recommendedName>
        <fullName>ATP-dependent RNA helicase ddx24</fullName>
        <ecNumber>3.6.4.13</ecNumber>
    </recommendedName>
    <alternativeName>
        <fullName>DEAD box protein 24</fullName>
    </alternativeName>
</protein>
<gene>
    <name type="primary">ddx24</name>
    <name type="ORF">DDB_G0281841</name>
</gene>
<name>DDX24_DICDI</name>
<comment type="function">
    <text evidence="5">ATP-dependent RNA helicase.</text>
</comment>
<comment type="catalytic activity">
    <reaction>
        <text>ATP + H2O = ADP + phosphate + H(+)</text>
        <dbReference type="Rhea" id="RHEA:13065"/>
        <dbReference type="ChEBI" id="CHEBI:15377"/>
        <dbReference type="ChEBI" id="CHEBI:15378"/>
        <dbReference type="ChEBI" id="CHEBI:30616"/>
        <dbReference type="ChEBI" id="CHEBI:43474"/>
        <dbReference type="ChEBI" id="CHEBI:456216"/>
        <dbReference type="EC" id="3.6.4.13"/>
    </reaction>
</comment>
<comment type="similarity">
    <text evidence="5">Belongs to the DEAD box helicase family. DDX24/MAK5 subfamily.</text>
</comment>
<organism>
    <name type="scientific">Dictyostelium discoideum</name>
    <name type="common">Social amoeba</name>
    <dbReference type="NCBI Taxonomy" id="44689"/>
    <lineage>
        <taxon>Eukaryota</taxon>
        <taxon>Amoebozoa</taxon>
        <taxon>Evosea</taxon>
        <taxon>Eumycetozoa</taxon>
        <taxon>Dictyostelia</taxon>
        <taxon>Dictyosteliales</taxon>
        <taxon>Dictyosteliaceae</taxon>
        <taxon>Dictyostelium</taxon>
    </lineage>
</organism>
<feature type="chain" id="PRO_0000327813" description="ATP-dependent RNA helicase ddx24">
    <location>
        <begin position="1"/>
        <end position="940"/>
    </location>
</feature>
<feature type="domain" description="Helicase ATP-binding" evidence="2">
    <location>
        <begin position="326"/>
        <end position="607"/>
    </location>
</feature>
<feature type="domain" description="Helicase C-terminal" evidence="3">
    <location>
        <begin position="650"/>
        <end position="797"/>
    </location>
</feature>
<feature type="region of interest" description="Disordered" evidence="4">
    <location>
        <begin position="50"/>
        <end position="243"/>
    </location>
</feature>
<feature type="region of interest" description="Disordered" evidence="4">
    <location>
        <begin position="364"/>
        <end position="398"/>
    </location>
</feature>
<feature type="region of interest" description="Disordered" evidence="4">
    <location>
        <begin position="517"/>
        <end position="556"/>
    </location>
</feature>
<feature type="coiled-coil region" evidence="1">
    <location>
        <begin position="42"/>
        <end position="66"/>
    </location>
</feature>
<feature type="short sequence motif" description="Q motif">
    <location>
        <begin position="294"/>
        <end position="322"/>
    </location>
</feature>
<feature type="short sequence motif" description="DEAD box">
    <location>
        <begin position="488"/>
        <end position="491"/>
    </location>
</feature>
<feature type="compositionally biased region" description="Basic and acidic residues" evidence="4">
    <location>
        <begin position="50"/>
        <end position="67"/>
    </location>
</feature>
<feature type="compositionally biased region" description="Low complexity" evidence="4">
    <location>
        <begin position="68"/>
        <end position="81"/>
    </location>
</feature>
<feature type="compositionally biased region" description="Basic residues" evidence="4">
    <location>
        <begin position="152"/>
        <end position="162"/>
    </location>
</feature>
<feature type="compositionally biased region" description="Acidic residues" evidence="4">
    <location>
        <begin position="168"/>
        <end position="180"/>
    </location>
</feature>
<feature type="compositionally biased region" description="Low complexity" evidence="4">
    <location>
        <begin position="198"/>
        <end position="209"/>
    </location>
</feature>
<feature type="compositionally biased region" description="Acidic residues" evidence="4">
    <location>
        <begin position="218"/>
        <end position="240"/>
    </location>
</feature>
<feature type="compositionally biased region" description="Polar residues" evidence="4">
    <location>
        <begin position="367"/>
        <end position="376"/>
    </location>
</feature>
<feature type="compositionally biased region" description="Acidic residues" evidence="4">
    <location>
        <begin position="378"/>
        <end position="396"/>
    </location>
</feature>
<feature type="compositionally biased region" description="Basic and acidic residues" evidence="4">
    <location>
        <begin position="517"/>
        <end position="531"/>
    </location>
</feature>
<feature type="compositionally biased region" description="Basic and acidic residues" evidence="4">
    <location>
        <begin position="538"/>
        <end position="551"/>
    </location>
</feature>
<feature type="binding site" evidence="2">
    <location>
        <begin position="339"/>
        <end position="346"/>
    </location>
    <ligand>
        <name>ATP</name>
        <dbReference type="ChEBI" id="CHEBI:30616"/>
    </ligand>
</feature>
<proteinExistence type="inferred from homology"/>
<reference key="1">
    <citation type="journal article" date="2005" name="Nature">
        <title>The genome of the social amoeba Dictyostelium discoideum.</title>
        <authorList>
            <person name="Eichinger L."/>
            <person name="Pachebat J.A."/>
            <person name="Gloeckner G."/>
            <person name="Rajandream M.A."/>
            <person name="Sucgang R."/>
            <person name="Berriman M."/>
            <person name="Song J."/>
            <person name="Olsen R."/>
            <person name="Szafranski K."/>
            <person name="Xu Q."/>
            <person name="Tunggal B."/>
            <person name="Kummerfeld S."/>
            <person name="Madera M."/>
            <person name="Konfortov B.A."/>
            <person name="Rivero F."/>
            <person name="Bankier A.T."/>
            <person name="Lehmann R."/>
            <person name="Hamlin N."/>
            <person name="Davies R."/>
            <person name="Gaudet P."/>
            <person name="Fey P."/>
            <person name="Pilcher K."/>
            <person name="Chen G."/>
            <person name="Saunders D."/>
            <person name="Sodergren E.J."/>
            <person name="Davis P."/>
            <person name="Kerhornou A."/>
            <person name="Nie X."/>
            <person name="Hall N."/>
            <person name="Anjard C."/>
            <person name="Hemphill L."/>
            <person name="Bason N."/>
            <person name="Farbrother P."/>
            <person name="Desany B."/>
            <person name="Just E."/>
            <person name="Morio T."/>
            <person name="Rost R."/>
            <person name="Churcher C.M."/>
            <person name="Cooper J."/>
            <person name="Haydock S."/>
            <person name="van Driessche N."/>
            <person name="Cronin A."/>
            <person name="Goodhead I."/>
            <person name="Muzny D.M."/>
            <person name="Mourier T."/>
            <person name="Pain A."/>
            <person name="Lu M."/>
            <person name="Harper D."/>
            <person name="Lindsay R."/>
            <person name="Hauser H."/>
            <person name="James K.D."/>
            <person name="Quiles M."/>
            <person name="Madan Babu M."/>
            <person name="Saito T."/>
            <person name="Buchrieser C."/>
            <person name="Wardroper A."/>
            <person name="Felder M."/>
            <person name="Thangavelu M."/>
            <person name="Johnson D."/>
            <person name="Knights A."/>
            <person name="Loulseged H."/>
            <person name="Mungall K.L."/>
            <person name="Oliver K."/>
            <person name="Price C."/>
            <person name="Quail M.A."/>
            <person name="Urushihara H."/>
            <person name="Hernandez J."/>
            <person name="Rabbinowitsch E."/>
            <person name="Steffen D."/>
            <person name="Sanders M."/>
            <person name="Ma J."/>
            <person name="Kohara Y."/>
            <person name="Sharp S."/>
            <person name="Simmonds M.N."/>
            <person name="Spiegler S."/>
            <person name="Tivey A."/>
            <person name="Sugano S."/>
            <person name="White B."/>
            <person name="Walker D."/>
            <person name="Woodward J.R."/>
            <person name="Winckler T."/>
            <person name="Tanaka Y."/>
            <person name="Shaulsky G."/>
            <person name="Schleicher M."/>
            <person name="Weinstock G.M."/>
            <person name="Rosenthal A."/>
            <person name="Cox E.C."/>
            <person name="Chisholm R.L."/>
            <person name="Gibbs R.A."/>
            <person name="Loomis W.F."/>
            <person name="Platzer M."/>
            <person name="Kay R.R."/>
            <person name="Williams J.G."/>
            <person name="Dear P.H."/>
            <person name="Noegel A.A."/>
            <person name="Barrell B.G."/>
            <person name="Kuspa A."/>
        </authorList>
    </citation>
    <scope>NUCLEOTIDE SEQUENCE [LARGE SCALE GENOMIC DNA]</scope>
    <source>
        <strain>AX4</strain>
    </source>
</reference>
<keyword id="KW-0067">ATP-binding</keyword>
<keyword id="KW-0175">Coiled coil</keyword>
<keyword id="KW-0347">Helicase</keyword>
<keyword id="KW-0378">Hydrolase</keyword>
<keyword id="KW-0547">Nucleotide-binding</keyword>
<keyword id="KW-1185">Reference proteome</keyword>
<keyword id="KW-0694">RNA-binding</keyword>
<sequence>MAKKKFVENTNWKKIDTDNQLIFEQGGFLGLEEIDPNDYFLTDKNVDKIEKQQKQKQKQEQEQEQKPTNKLTTKSTTKSTPVQNKNQKPVDKKRKSKKGNDDSDNEYSGYQDDSDQDDEYSAAKKKPRIIKPTETVDMGTELLNSFVEGTVHNKKKQRKGIKVKQIIDDNDNDFEDEEEEVKPQQKLQKQKQQEQKQKQPQKQPQQPNKKNNKKELQKEEEEQMEEEKEEEEVQQEEEEEKEIKKPIKEKKVKTQKQIEAAKKNINKLEKIKKRKEISEQKTISKEEQDQLDMSEWNSYNLDPLILKGLRSLGFSKPTEIQSSVIPVAVSSGYDVIGAAQTGSGKTLAFGIPMVQRILQHLRKHGQNVENKANKQQNDNDDENEDVEEEEEEEEEEGRSKEYRKLFSLVICPTRELAIQVTNHIKSIISHTNLKVISIVGGMASQRQQRVLSKRPEIVVATPGRLWELITEGHQHLVELESLLCLGIDEADRMVEQGHFAELESILKTLPIHRTAMSKKERLKKKETEEKRNKRRKVDKLNDKGEMIKGDQDDMDDQIPDEEMEELEQEEQNHLTTTHKRQTFVFSATLVNIPGDGAPTSQKKKYRKLTPIENLIEKVRFQRDYKLIDVTQKRLTAKNLLETKIFCNLEEKDMYLYYFVERYPGRTLVFVNSIDCARRLIPIFNILEVPVFALHAQMQQKQRLKNLDRFRTLDNVVLIATDVAARGLDIPLVQHVIHYQVPRTTQLYIHRSGRTARSDQDGISVVLVTPKERPLYIKLDSSIEHDIGNFPTDIRYMEGVRDRIELAKEIDKLSHQSLKDNREKSWFKKQAEEMDIELDGDFFGENSDDEQSEDTRIAEQKKQFKLKQLRAQLKHLLSRSLLPRGVSQSYITASAIQELESKSQSSAATDFSNKAKNVIGKKAKQLAIENHSKFLTKNKKK</sequence>
<dbReference type="EC" id="3.6.4.13"/>
<dbReference type="EMBL" id="AAFI02000043">
    <property type="protein sequence ID" value="EAL66480.1"/>
    <property type="molecule type" value="Genomic_DNA"/>
</dbReference>
<dbReference type="RefSeq" id="XP_640452.1">
    <property type="nucleotide sequence ID" value="XM_635360.1"/>
</dbReference>
<dbReference type="SMR" id="Q54TD7"/>
<dbReference type="FunCoup" id="Q54TD7">
    <property type="interactions" value="810"/>
</dbReference>
<dbReference type="STRING" id="44689.Q54TD7"/>
<dbReference type="PaxDb" id="44689-DDB0234200"/>
<dbReference type="EnsemblProtists" id="EAL66480">
    <property type="protein sequence ID" value="EAL66480"/>
    <property type="gene ID" value="DDB_G0281841"/>
</dbReference>
<dbReference type="GeneID" id="8623265"/>
<dbReference type="KEGG" id="ddi:DDB_G0281841"/>
<dbReference type="dictyBase" id="DDB_G0281841">
    <property type="gene designation" value="ddx24"/>
</dbReference>
<dbReference type="VEuPathDB" id="AmoebaDB:DDB_G0281841"/>
<dbReference type="eggNOG" id="KOG0347">
    <property type="taxonomic scope" value="Eukaryota"/>
</dbReference>
<dbReference type="HOGENOM" id="CLU_003041_13_1_1"/>
<dbReference type="InParanoid" id="Q54TD7"/>
<dbReference type="OMA" id="YYFVERY"/>
<dbReference type="PhylomeDB" id="Q54TD7"/>
<dbReference type="PRO" id="PR:Q54TD7"/>
<dbReference type="Proteomes" id="UP000002195">
    <property type="component" value="Chromosome 3"/>
</dbReference>
<dbReference type="GO" id="GO:0005730">
    <property type="term" value="C:nucleolus"/>
    <property type="evidence" value="ECO:0000318"/>
    <property type="project" value="GO_Central"/>
</dbReference>
<dbReference type="GO" id="GO:0005524">
    <property type="term" value="F:ATP binding"/>
    <property type="evidence" value="ECO:0007669"/>
    <property type="project" value="UniProtKB-KW"/>
</dbReference>
<dbReference type="GO" id="GO:0016887">
    <property type="term" value="F:ATP hydrolysis activity"/>
    <property type="evidence" value="ECO:0007669"/>
    <property type="project" value="RHEA"/>
</dbReference>
<dbReference type="GO" id="GO:0003723">
    <property type="term" value="F:RNA binding"/>
    <property type="evidence" value="ECO:0007669"/>
    <property type="project" value="UniProtKB-KW"/>
</dbReference>
<dbReference type="GO" id="GO:0003724">
    <property type="term" value="F:RNA helicase activity"/>
    <property type="evidence" value="ECO:0007669"/>
    <property type="project" value="UniProtKB-EC"/>
</dbReference>
<dbReference type="CDD" id="cd17946">
    <property type="entry name" value="DEADc_DDX24"/>
    <property type="match status" value="1"/>
</dbReference>
<dbReference type="CDD" id="cd18787">
    <property type="entry name" value="SF2_C_DEAD"/>
    <property type="match status" value="1"/>
</dbReference>
<dbReference type="Gene3D" id="3.40.50.300">
    <property type="entry name" value="P-loop containing nucleotide triphosphate hydrolases"/>
    <property type="match status" value="2"/>
</dbReference>
<dbReference type="InterPro" id="IPR011545">
    <property type="entry name" value="DEAD/DEAH_box_helicase_dom"/>
</dbReference>
<dbReference type="InterPro" id="IPR050079">
    <property type="entry name" value="DEAD_box_RNA_helicase"/>
</dbReference>
<dbReference type="InterPro" id="IPR014001">
    <property type="entry name" value="Helicase_ATP-bd"/>
</dbReference>
<dbReference type="InterPro" id="IPR001650">
    <property type="entry name" value="Helicase_C-like"/>
</dbReference>
<dbReference type="InterPro" id="IPR027417">
    <property type="entry name" value="P-loop_NTPase"/>
</dbReference>
<dbReference type="InterPro" id="IPR014014">
    <property type="entry name" value="RNA_helicase_DEAD_Q_motif"/>
</dbReference>
<dbReference type="PANTHER" id="PTHR47959:SF1">
    <property type="entry name" value="ATP-DEPENDENT RNA HELICASE DBPA"/>
    <property type="match status" value="1"/>
</dbReference>
<dbReference type="PANTHER" id="PTHR47959">
    <property type="entry name" value="ATP-DEPENDENT RNA HELICASE RHLE-RELATED"/>
    <property type="match status" value="1"/>
</dbReference>
<dbReference type="Pfam" id="PF00270">
    <property type="entry name" value="DEAD"/>
    <property type="match status" value="1"/>
</dbReference>
<dbReference type="Pfam" id="PF00271">
    <property type="entry name" value="Helicase_C"/>
    <property type="match status" value="1"/>
</dbReference>
<dbReference type="SMART" id="SM00487">
    <property type="entry name" value="DEXDc"/>
    <property type="match status" value="1"/>
</dbReference>
<dbReference type="SMART" id="SM00490">
    <property type="entry name" value="HELICc"/>
    <property type="match status" value="1"/>
</dbReference>
<dbReference type="SUPFAM" id="SSF52540">
    <property type="entry name" value="P-loop containing nucleoside triphosphate hydrolases"/>
    <property type="match status" value="1"/>
</dbReference>
<dbReference type="PROSITE" id="PS51192">
    <property type="entry name" value="HELICASE_ATP_BIND_1"/>
    <property type="match status" value="1"/>
</dbReference>
<dbReference type="PROSITE" id="PS51194">
    <property type="entry name" value="HELICASE_CTER"/>
    <property type="match status" value="1"/>
</dbReference>
<dbReference type="PROSITE" id="PS51195">
    <property type="entry name" value="Q_MOTIF"/>
    <property type="match status" value="1"/>
</dbReference>
<evidence type="ECO:0000255" key="1"/>
<evidence type="ECO:0000255" key="2">
    <source>
        <dbReference type="PROSITE-ProRule" id="PRU00541"/>
    </source>
</evidence>
<evidence type="ECO:0000255" key="3">
    <source>
        <dbReference type="PROSITE-ProRule" id="PRU00542"/>
    </source>
</evidence>
<evidence type="ECO:0000256" key="4">
    <source>
        <dbReference type="SAM" id="MobiDB-lite"/>
    </source>
</evidence>
<evidence type="ECO:0000305" key="5"/>
<accession>Q54TD7</accession>